<reference key="1">
    <citation type="journal article" date="1997" name="Nature">
        <title>The nucleotide sequence of Saccharomyces cerevisiae chromosome V.</title>
        <authorList>
            <person name="Dietrich F.S."/>
            <person name="Mulligan J.T."/>
            <person name="Hennessy K.M."/>
            <person name="Yelton M.A."/>
            <person name="Allen E."/>
            <person name="Araujo R."/>
            <person name="Aviles E."/>
            <person name="Berno A."/>
            <person name="Brennan T."/>
            <person name="Carpenter J."/>
            <person name="Chen E."/>
            <person name="Cherry J.M."/>
            <person name="Chung E."/>
            <person name="Duncan M."/>
            <person name="Guzman E."/>
            <person name="Hartzell G."/>
            <person name="Hunicke-Smith S."/>
            <person name="Hyman R.W."/>
            <person name="Kayser A."/>
            <person name="Komp C."/>
            <person name="Lashkari D."/>
            <person name="Lew H."/>
            <person name="Lin D."/>
            <person name="Mosedale D."/>
            <person name="Nakahara K."/>
            <person name="Namath A."/>
            <person name="Norgren R."/>
            <person name="Oefner P."/>
            <person name="Oh C."/>
            <person name="Petel F.X."/>
            <person name="Roberts D."/>
            <person name="Sehl P."/>
            <person name="Schramm S."/>
            <person name="Shogren T."/>
            <person name="Smith V."/>
            <person name="Taylor P."/>
            <person name="Wei Y."/>
            <person name="Botstein D."/>
            <person name="Davis R.W."/>
        </authorList>
    </citation>
    <scope>NUCLEOTIDE SEQUENCE [LARGE SCALE GENOMIC DNA]</scope>
    <source>
        <strain>ATCC 204508 / S288c</strain>
    </source>
</reference>
<reference key="2">
    <citation type="journal article" date="2014" name="G3 (Bethesda)">
        <title>The reference genome sequence of Saccharomyces cerevisiae: Then and now.</title>
        <authorList>
            <person name="Engel S.R."/>
            <person name="Dietrich F.S."/>
            <person name="Fisk D.G."/>
            <person name="Binkley G."/>
            <person name="Balakrishnan R."/>
            <person name="Costanzo M.C."/>
            <person name="Dwight S.S."/>
            <person name="Hitz B.C."/>
            <person name="Karra K."/>
            <person name="Nash R.S."/>
            <person name="Weng S."/>
            <person name="Wong E.D."/>
            <person name="Lloyd P."/>
            <person name="Skrzypek M.S."/>
            <person name="Miyasato S.R."/>
            <person name="Simison M."/>
            <person name="Cherry J.M."/>
        </authorList>
    </citation>
    <scope>GENOME REANNOTATION</scope>
    <source>
        <strain>ATCC 204508 / S288c</strain>
    </source>
</reference>
<reference key="3">
    <citation type="journal article" date="2001" name="Mol. Biol. Cell">
        <title>A genomic study of the bipolar bud site selection pattern in Saccharomyces cerevisiae.</title>
        <authorList>
            <person name="Ni L."/>
            <person name="Snyder M."/>
        </authorList>
    </citation>
    <scope>FUNCTION</scope>
</reference>
<reference key="4">
    <citation type="journal article" date="2003" name="Nature">
        <title>Global analysis of protein localization in budding yeast.</title>
        <authorList>
            <person name="Huh W.-K."/>
            <person name="Falvo J.V."/>
            <person name="Gerke L.C."/>
            <person name="Carroll A.S."/>
            <person name="Howson R.W."/>
            <person name="Weissman J.S."/>
            <person name="O'Shea E.K."/>
        </authorList>
    </citation>
    <scope>SUBCELLULAR LOCATION [LARGE SCALE ANALYSIS]</scope>
</reference>
<protein>
    <recommendedName>
        <fullName>Putative pyridoxal kinase BUD16</fullName>
        <ecNumber>2.7.1.35</ecNumber>
    </recommendedName>
    <alternativeName>
        <fullName>Bud site selection protein 16</fullName>
    </alternativeName>
</protein>
<comment type="function">
    <text evidence="1 2">Required for synthesis of pyridoxal-5-phosphate from vitamin B6 (By similarity). Important for bud site selection.</text>
</comment>
<comment type="catalytic activity">
    <reaction>
        <text>pyridoxal + ATP = pyridoxal 5'-phosphate + ADP + H(+)</text>
        <dbReference type="Rhea" id="RHEA:10224"/>
        <dbReference type="ChEBI" id="CHEBI:15378"/>
        <dbReference type="ChEBI" id="CHEBI:17310"/>
        <dbReference type="ChEBI" id="CHEBI:30616"/>
        <dbReference type="ChEBI" id="CHEBI:456216"/>
        <dbReference type="ChEBI" id="CHEBI:597326"/>
        <dbReference type="EC" id="2.7.1.35"/>
    </reaction>
</comment>
<comment type="cofactor">
    <cofactor evidence="1">
        <name>a divalent metal cation</name>
        <dbReference type="ChEBI" id="CHEBI:60240"/>
    </cofactor>
</comment>
<comment type="subcellular location">
    <subcellularLocation>
        <location evidence="3">Cytoplasm</location>
    </subcellularLocation>
    <subcellularLocation>
        <location evidence="3">Nucleus</location>
    </subcellularLocation>
</comment>
<comment type="similarity">
    <text evidence="4">Belongs to the pyridoxine kinase family.</text>
</comment>
<feature type="chain" id="PRO_0000213348" description="Putative pyridoxal kinase BUD16">
    <location>
        <begin position="1"/>
        <end position="312"/>
    </location>
</feature>
<feature type="binding site" evidence="1">
    <location>
        <position position="9"/>
    </location>
    <ligand>
        <name>substrate</name>
    </ligand>
</feature>
<feature type="binding site" evidence="1">
    <location>
        <position position="44"/>
    </location>
    <ligand>
        <name>substrate</name>
    </ligand>
</feature>
<feature type="binding site" evidence="1">
    <location>
        <position position="122"/>
    </location>
    <ligand>
        <name>substrate</name>
    </ligand>
</feature>
<feature type="binding site" evidence="1">
    <location>
        <begin position="183"/>
        <end position="184"/>
    </location>
    <ligand>
        <name>ATP</name>
        <dbReference type="ChEBI" id="CHEBI:30616"/>
    </ligand>
</feature>
<feature type="binding site" evidence="1">
    <location>
        <begin position="211"/>
        <end position="223"/>
    </location>
    <ligand>
        <name>ATP</name>
        <dbReference type="ChEBI" id="CHEBI:30616"/>
    </ligand>
</feature>
<feature type="binding site" evidence="1">
    <location>
        <position position="224"/>
    </location>
    <ligand>
        <name>substrate</name>
    </ligand>
</feature>
<dbReference type="EC" id="2.7.1.35"/>
<dbReference type="EMBL" id="U18530">
    <property type="protein sequence ID" value="AAB64506.1"/>
    <property type="molecule type" value="Genomic_DNA"/>
</dbReference>
<dbReference type="EMBL" id="BK006939">
    <property type="protein sequence ID" value="DAA07624.1"/>
    <property type="molecule type" value="Genomic_DNA"/>
</dbReference>
<dbReference type="PIR" id="S50430">
    <property type="entry name" value="S50430"/>
</dbReference>
<dbReference type="RefSeq" id="NP_010885.1">
    <property type="nucleotide sequence ID" value="NM_001178844.1"/>
</dbReference>
<dbReference type="SMR" id="P39988"/>
<dbReference type="BioGRID" id="36700">
    <property type="interactions" value="83"/>
</dbReference>
<dbReference type="FunCoup" id="P39988">
    <property type="interactions" value="363"/>
</dbReference>
<dbReference type="IntAct" id="P39988">
    <property type="interactions" value="4"/>
</dbReference>
<dbReference type="STRING" id="4932.YEL029C"/>
<dbReference type="PaxDb" id="4932-YEL029C"/>
<dbReference type="PeptideAtlas" id="P39988"/>
<dbReference type="EnsemblFungi" id="YEL029C_mRNA">
    <property type="protein sequence ID" value="YEL029C"/>
    <property type="gene ID" value="YEL029C"/>
</dbReference>
<dbReference type="GeneID" id="856683"/>
<dbReference type="KEGG" id="sce:YEL029C"/>
<dbReference type="AGR" id="SGD:S000000755"/>
<dbReference type="SGD" id="S000000755">
    <property type="gene designation" value="BUD16"/>
</dbReference>
<dbReference type="VEuPathDB" id="FungiDB:YEL029C"/>
<dbReference type="eggNOG" id="KOG2599">
    <property type="taxonomic scope" value="Eukaryota"/>
</dbReference>
<dbReference type="GeneTree" id="ENSGT00390000003874"/>
<dbReference type="HOGENOM" id="CLU_046496_1_0_1"/>
<dbReference type="InParanoid" id="P39988"/>
<dbReference type="OMA" id="HTQYGQW"/>
<dbReference type="OrthoDB" id="2104723at2759"/>
<dbReference type="BioCyc" id="MetaCyc:MONOMER3O-37"/>
<dbReference type="BioCyc" id="YEAST:MONOMER3O-37"/>
<dbReference type="Reactome" id="R-SCE-6798695">
    <property type="pathway name" value="Neutrophil degranulation"/>
</dbReference>
<dbReference type="Reactome" id="R-SCE-964975">
    <property type="pathway name" value="Vitamin B6 activation to pyridoxal phosphate"/>
</dbReference>
<dbReference type="BioGRID-ORCS" id="856683">
    <property type="hits" value="2 hits in 10 CRISPR screens"/>
</dbReference>
<dbReference type="PRO" id="PR:P39988"/>
<dbReference type="Proteomes" id="UP000002311">
    <property type="component" value="Chromosome V"/>
</dbReference>
<dbReference type="RNAct" id="P39988">
    <property type="molecule type" value="protein"/>
</dbReference>
<dbReference type="GO" id="GO:0005829">
    <property type="term" value="C:cytosol"/>
    <property type="evidence" value="ECO:0000318"/>
    <property type="project" value="GO_Central"/>
</dbReference>
<dbReference type="GO" id="GO:0005634">
    <property type="term" value="C:nucleus"/>
    <property type="evidence" value="ECO:0007669"/>
    <property type="project" value="UniProtKB-SubCell"/>
</dbReference>
<dbReference type="GO" id="GO:0005777">
    <property type="term" value="C:peroxisome"/>
    <property type="evidence" value="ECO:0000314"/>
    <property type="project" value="SGD"/>
</dbReference>
<dbReference type="GO" id="GO:0005524">
    <property type="term" value="F:ATP binding"/>
    <property type="evidence" value="ECO:0007669"/>
    <property type="project" value="UniProtKB-KW"/>
</dbReference>
<dbReference type="GO" id="GO:0046872">
    <property type="term" value="F:metal ion binding"/>
    <property type="evidence" value="ECO:0007669"/>
    <property type="project" value="UniProtKB-KW"/>
</dbReference>
<dbReference type="GO" id="GO:0008478">
    <property type="term" value="F:pyridoxal kinase activity"/>
    <property type="evidence" value="ECO:0000247"/>
    <property type="project" value="SGD"/>
</dbReference>
<dbReference type="GO" id="GO:0009443">
    <property type="term" value="P:pyridoxal 5'-phosphate salvage"/>
    <property type="evidence" value="ECO:0000318"/>
    <property type="project" value="GO_Central"/>
</dbReference>
<dbReference type="GO" id="GO:0042823">
    <property type="term" value="P:pyridoxal phosphate biosynthetic process"/>
    <property type="evidence" value="ECO:0000315"/>
    <property type="project" value="SGD"/>
</dbReference>
<dbReference type="CDD" id="cd01173">
    <property type="entry name" value="pyridoxal_pyridoxamine_kinase"/>
    <property type="match status" value="1"/>
</dbReference>
<dbReference type="Gene3D" id="3.40.1190.20">
    <property type="match status" value="1"/>
</dbReference>
<dbReference type="InterPro" id="IPR013749">
    <property type="entry name" value="PM/HMP-P_kinase-1"/>
</dbReference>
<dbReference type="InterPro" id="IPR004625">
    <property type="entry name" value="PyrdxlKinase"/>
</dbReference>
<dbReference type="InterPro" id="IPR029056">
    <property type="entry name" value="Ribokinase-like"/>
</dbReference>
<dbReference type="NCBIfam" id="TIGR00687">
    <property type="entry name" value="pyridox_kin"/>
    <property type="match status" value="1"/>
</dbReference>
<dbReference type="PANTHER" id="PTHR10534">
    <property type="entry name" value="PYRIDOXAL KINASE"/>
    <property type="match status" value="1"/>
</dbReference>
<dbReference type="PANTHER" id="PTHR10534:SF2">
    <property type="entry name" value="PYRIDOXAL KINASE"/>
    <property type="match status" value="1"/>
</dbReference>
<dbReference type="Pfam" id="PF08543">
    <property type="entry name" value="Phos_pyr_kin"/>
    <property type="match status" value="1"/>
</dbReference>
<dbReference type="SUPFAM" id="SSF53613">
    <property type="entry name" value="Ribokinase-like"/>
    <property type="match status" value="1"/>
</dbReference>
<keyword id="KW-0067">ATP-binding</keyword>
<keyword id="KW-0131">Cell cycle</keyword>
<keyword id="KW-0963">Cytoplasm</keyword>
<keyword id="KW-0418">Kinase</keyword>
<keyword id="KW-0479">Metal-binding</keyword>
<keyword id="KW-0547">Nucleotide-binding</keyword>
<keyword id="KW-0539">Nucleus</keyword>
<keyword id="KW-1185">Reference proteome</keyword>
<keyword id="KW-0808">Transferase</keyword>
<keyword id="KW-0862">Zinc</keyword>
<gene>
    <name type="primary">BUD16</name>
    <name type="ordered locus">YEL029C</name>
</gene>
<organism>
    <name type="scientific">Saccharomyces cerevisiae (strain ATCC 204508 / S288c)</name>
    <name type="common">Baker's yeast</name>
    <dbReference type="NCBI Taxonomy" id="559292"/>
    <lineage>
        <taxon>Eukaryota</taxon>
        <taxon>Fungi</taxon>
        <taxon>Dikarya</taxon>
        <taxon>Ascomycota</taxon>
        <taxon>Saccharomycotina</taxon>
        <taxon>Saccharomycetes</taxon>
        <taxon>Saccharomycetales</taxon>
        <taxon>Saccharomycetaceae</taxon>
        <taxon>Saccharomyces</taxon>
    </lineage>
</organism>
<name>BUD16_YEAST</name>
<proteinExistence type="evidence at protein level"/>
<evidence type="ECO:0000250" key="1"/>
<evidence type="ECO:0000269" key="2">
    <source>
    </source>
</evidence>
<evidence type="ECO:0000269" key="3">
    <source>
    </source>
</evidence>
<evidence type="ECO:0000305" key="4"/>
<accession>P39988</accession>
<accession>D3DLM0</accession>
<sequence>MPRLLATQSHVVHGYVGNKAATFPLQCLGWDVDCCNSVQFSNHTGYGLDKVFGTITRETDLKELLSGLFDNFSQDYQALLSGYLPNKNSVRCMGTYYAKFKEANPEMIWLMDPVMGDEGQLYVSEDVIPEYRKLALSPKQLVDIITPNQFELEILYGGEIKTKEHLKKALKKLHQTIPVIIVTSCDCKMFDDKDFIYCVASMEGKTPIVYRVPFIDSYFTGVGDLFSALLLDRVYKILSNPTTTLKFEDQVNNVLNVIQKVLKITRSYASGKMKAKMGSALEMKEMELRLIESRDIYETINIHQTDYIYARL</sequence>